<protein>
    <recommendedName>
        <fullName evidence="1">Glycosyl hydrolase DigH</fullName>
        <ecNumber evidence="1">3.2.1.-</ecNumber>
    </recommendedName>
    <alternativeName>
        <fullName evidence="1">Divisome-localized glycosyl hydrolase</fullName>
    </alternativeName>
</protein>
<gene>
    <name evidence="1" type="primary">digH</name>
    <name type="synonym">yddW</name>
    <name type="ordered locus">c1920</name>
</gene>
<sequence>MDICSRNEKLAIRRPAILVALALLLCSCKSTPPESMVTPPAGSKPPATTQQSSQPMRGIWLATVSRLDWPPVSSVNISNPTSRARVQQQAMIDKLDHLQRLGINTVFFQVKPDGTALWPSKILPWSDLMTGKIGENPGYDPLQFMLDEAHKRGMKVHAWFNPYRVSVNTKPGTIRELNSTLSQQPASVYVQHRDWIRTSGDRFVLDPGIPEVQDWITSIVAEVVSRYPVDGVQFDDYFYTESPGSRLNDNETYRKYGGAFASKADWRRNNTQQLIAKVSHTIKSIKPEVEFGVSPAGVWRNRSHDPLGSDTRGAAAYDESYADTRRWVEQGLLDYIAPQIYWPFSRSAARYDVLAKWWADVVKPTRTRLYIGIAFYKVGEPSKIEPDWMINGGVPELKKQLDLNDALPEISGTILFREDYLNKPQTQQAVSYLQSRWGS</sequence>
<organism>
    <name type="scientific">Escherichia coli O6:H1 (strain CFT073 / ATCC 700928 / UPEC)</name>
    <dbReference type="NCBI Taxonomy" id="199310"/>
    <lineage>
        <taxon>Bacteria</taxon>
        <taxon>Pseudomonadati</taxon>
        <taxon>Pseudomonadota</taxon>
        <taxon>Gammaproteobacteria</taxon>
        <taxon>Enterobacterales</taxon>
        <taxon>Enterobacteriaceae</taxon>
        <taxon>Escherichia</taxon>
    </lineage>
</organism>
<keyword id="KW-0998">Cell outer membrane</keyword>
<keyword id="KW-0961">Cell wall biogenesis/degradation</keyword>
<keyword id="KW-0326">Glycosidase</keyword>
<keyword id="KW-0378">Hydrolase</keyword>
<keyword id="KW-0449">Lipoprotein</keyword>
<keyword id="KW-0472">Membrane</keyword>
<keyword id="KW-0564">Palmitate</keyword>
<keyword id="KW-1185">Reference proteome</keyword>
<keyword id="KW-0732">Signal</keyword>
<accession>Q8CW29</accession>
<comment type="function">
    <text evidence="1">Divisome-localized glycosyl hydrolase that cleaves peptide-free (denuded) peptidoglycans.</text>
</comment>
<comment type="subcellular location">
    <subcellularLocation>
        <location evidence="1">Cell outer membrane</location>
        <topology evidence="2">Lipid-anchor</topology>
    </subcellularLocation>
    <text evidence="1">Localizes to the divisome.</text>
</comment>
<comment type="similarity">
    <text evidence="4">Belongs to the glycosyl hydrolase-like 10 (GHL10) family.</text>
</comment>
<name>DIGH_ECOL6</name>
<feature type="signal peptide" evidence="2">
    <location>
        <begin position="1"/>
        <end position="27"/>
    </location>
</feature>
<feature type="chain" id="PRO_0000013769" description="Glycosyl hydrolase DigH">
    <location>
        <begin position="28"/>
        <end position="439"/>
    </location>
</feature>
<feature type="region of interest" description="Disordered" evidence="3">
    <location>
        <begin position="34"/>
        <end position="54"/>
    </location>
</feature>
<feature type="lipid moiety-binding region" description="N-palmitoyl cysteine" evidence="2">
    <location>
        <position position="28"/>
    </location>
</feature>
<feature type="lipid moiety-binding region" description="S-diacylglycerol cysteine" evidence="2">
    <location>
        <position position="28"/>
    </location>
</feature>
<evidence type="ECO:0000250" key="1">
    <source>
        <dbReference type="UniProtKB" id="P64426"/>
    </source>
</evidence>
<evidence type="ECO:0000255" key="2">
    <source>
        <dbReference type="PROSITE-ProRule" id="PRU00303"/>
    </source>
</evidence>
<evidence type="ECO:0000256" key="3">
    <source>
        <dbReference type="SAM" id="MobiDB-lite"/>
    </source>
</evidence>
<evidence type="ECO:0000305" key="4"/>
<proteinExistence type="inferred from homology"/>
<dbReference type="EC" id="3.2.1.-" evidence="1"/>
<dbReference type="EMBL" id="AE014075">
    <property type="protein sequence ID" value="AAN80378.1"/>
    <property type="molecule type" value="Genomic_DNA"/>
</dbReference>
<dbReference type="RefSeq" id="WP_000350354.1">
    <property type="nucleotide sequence ID" value="NZ_CP051263.1"/>
</dbReference>
<dbReference type="SMR" id="Q8CW29"/>
<dbReference type="STRING" id="199310.c1920"/>
<dbReference type="KEGG" id="ecc:c1920"/>
<dbReference type="eggNOG" id="COG1649">
    <property type="taxonomic scope" value="Bacteria"/>
</dbReference>
<dbReference type="HOGENOM" id="CLU_019247_0_1_6"/>
<dbReference type="BioCyc" id="ECOL199310:C1920-MONOMER"/>
<dbReference type="Proteomes" id="UP000001410">
    <property type="component" value="Chromosome"/>
</dbReference>
<dbReference type="GO" id="GO:0009279">
    <property type="term" value="C:cell outer membrane"/>
    <property type="evidence" value="ECO:0007669"/>
    <property type="project" value="UniProtKB-SubCell"/>
</dbReference>
<dbReference type="GO" id="GO:0016798">
    <property type="term" value="F:hydrolase activity, acting on glycosyl bonds"/>
    <property type="evidence" value="ECO:0007669"/>
    <property type="project" value="UniProtKB-KW"/>
</dbReference>
<dbReference type="GO" id="GO:0071555">
    <property type="term" value="P:cell wall organization"/>
    <property type="evidence" value="ECO:0007669"/>
    <property type="project" value="UniProtKB-KW"/>
</dbReference>
<dbReference type="CDD" id="cd00551">
    <property type="entry name" value="AmyAc_family"/>
    <property type="match status" value="1"/>
</dbReference>
<dbReference type="Gene3D" id="3.20.20.80">
    <property type="entry name" value="Glycosidases"/>
    <property type="match status" value="1"/>
</dbReference>
<dbReference type="InterPro" id="IPR052177">
    <property type="entry name" value="Divisome_Glycosyl_Hydrolase"/>
</dbReference>
<dbReference type="InterPro" id="IPR003790">
    <property type="entry name" value="GHL10"/>
</dbReference>
<dbReference type="InterPro" id="IPR017853">
    <property type="entry name" value="Glycoside_hydrolase_SF"/>
</dbReference>
<dbReference type="PANTHER" id="PTHR43405">
    <property type="entry name" value="GLYCOSYL HYDROLASE DIGH"/>
    <property type="match status" value="1"/>
</dbReference>
<dbReference type="PANTHER" id="PTHR43405:SF1">
    <property type="entry name" value="GLYCOSYL HYDROLASE DIGH"/>
    <property type="match status" value="1"/>
</dbReference>
<dbReference type="Pfam" id="PF02638">
    <property type="entry name" value="GHL10"/>
    <property type="match status" value="1"/>
</dbReference>
<dbReference type="SUPFAM" id="SSF51445">
    <property type="entry name" value="(Trans)glycosidases"/>
    <property type="match status" value="1"/>
</dbReference>
<dbReference type="PROSITE" id="PS51257">
    <property type="entry name" value="PROKAR_LIPOPROTEIN"/>
    <property type="match status" value="1"/>
</dbReference>
<reference key="1">
    <citation type="journal article" date="2002" name="Proc. Natl. Acad. Sci. U.S.A.">
        <title>Extensive mosaic structure revealed by the complete genome sequence of uropathogenic Escherichia coli.</title>
        <authorList>
            <person name="Welch R.A."/>
            <person name="Burland V."/>
            <person name="Plunkett G. III"/>
            <person name="Redford P."/>
            <person name="Roesch P."/>
            <person name="Rasko D."/>
            <person name="Buckles E.L."/>
            <person name="Liou S.-R."/>
            <person name="Boutin A."/>
            <person name="Hackett J."/>
            <person name="Stroud D."/>
            <person name="Mayhew G.F."/>
            <person name="Rose D.J."/>
            <person name="Zhou S."/>
            <person name="Schwartz D.C."/>
            <person name="Perna N.T."/>
            <person name="Mobley H.L.T."/>
            <person name="Donnenberg M.S."/>
            <person name="Blattner F.R."/>
        </authorList>
    </citation>
    <scope>NUCLEOTIDE SEQUENCE [LARGE SCALE GENOMIC DNA]</scope>
    <source>
        <strain>CFT073 / ATCC 700928 / UPEC</strain>
    </source>
</reference>